<sequence length="1178" mass="129685">MLKFQTVRGGLRLLGVRRSSSAPVASPNVRRLEYKPIKKVMVANRGEIAIRVFRACTELGIRTVAVYSEQDTGQMHRQKADEAYLIGRGLAPVQAYLHIPDIIKVAKENGVDAVHPGYGFLSERADFAQACQDAGVRFIGPSPEVVRKMGDKVEARAIAIAAGVPVVPGTDSPISSLHEAHEFSNTFGFPIIFKAAYGGGGRGMRVVHSYEELEENYTRAYSEALAAFGNGALFVEKFIEKPRHIEVQILGDQYGNILHLYERDCSIQRRHQKVVEIAPATHLDPQLRSRLTSDSVKLAKQVGYENAGTVEFLVDKHGKHYFIEVNSRLQVEHTVTEEITDVDLVHAQIHVSEGRSLPDLGLRQENIRINGCAIQCRVTTEDPARSFQPDTGRIEVFRSGEGMGIRLDNASAFQGAVISPHYDSLLVKVIAHGKDHPTAATKMSRALAEFRVRGVKTNIPFLQNVLNNQQFLAGTVDTQFIDENPELFQLRPAQNRAQKLLHYLGHVMVNGPTTPIPVNVSPSPVDPAVPVVPIGPPPAGFRDILLREGPEGFARAVRNHQGLLLMDTTFRDAHQSLLATRVRTHDLKKIAPYVAHNFNKLFSMENWGGATFDVAMRFLYECPWRRLQELRELIPNIPFQMLLRGANAVGYTNYPDNVVFKFCEVAKENGMDVFRVFDSLNYLPNMLLGMEAAGSAGGVVEAAISYTGDVADPSRTKYSLEYYMGLAEELVRAGTHILCIKDMAGLLKPAACTMLVSSLRDRFPDLPLHIHTHDTSGAGVAAMLACAQAGADVVDVAVDSMSGMTSQPSMGALVACTKGTPLDTEVPLERVFDYSEYWEGARGLYAAFDCTATMKSGNSDVYENEIPGGQYTNLHFQAHSMGLGSKFKEVKKAYVEANQMLGDLIKVTPSSKIVGDLAQFMVQNGLSRAEAEAQAEELSFPRSVVEFLQGYIGIPHGGFPEPFRSKVLKDLPRIEGRPGASLPPLNLKELEKDLIDRHGEEVTPEDVLSAAMYPDVFAQFKDFTATFGPLDSLNTRLFLQGPKIAEEFEVELERGKTLHIKALAVSDLNRAGQRQVFFELNGQLRSILVKDTQAMKEMHFHPKALKDVKGQIGAPMPGKVIDIKVAAGDKVAKGQPLCVLSAMKMETVVTSPMEGTIRKVHVTKDMTLEGDDLILEIE</sequence>
<reference key="1">
    <citation type="journal article" date="1993" name="Proc. Natl. Acad. Sci. U.S.A.">
        <title>Adipose pyruvate carboxylase: amino acid sequence and domain structure deduced from cDNA sequencing.</title>
        <authorList>
            <person name="Zhang J."/>
            <person name="Xia W.L."/>
            <person name="Brew K."/>
            <person name="Ahmad F."/>
        </authorList>
    </citation>
    <scope>NUCLEOTIDE SEQUENCE [MRNA]</scope>
    <source>
        <tissue>Adipocyte</tissue>
    </source>
</reference>
<reference key="2">
    <citation type="journal article" date="2004" name="Genome Res.">
        <title>The status, quality, and expansion of the NIH full-length cDNA project: the Mammalian Gene Collection (MGC).</title>
        <authorList>
            <consortium name="The MGC Project Team"/>
        </authorList>
    </citation>
    <scope>NUCLEOTIDE SEQUENCE [LARGE SCALE MRNA]</scope>
    <source>
        <strain>FVB/N</strain>
        <tissue>Liver</tissue>
    </source>
</reference>
<reference key="3">
    <citation type="journal article" date="2007" name="Proc. Natl. Acad. Sci. U.S.A.">
        <title>Large-scale phosphorylation analysis of mouse liver.</title>
        <authorList>
            <person name="Villen J."/>
            <person name="Beausoleil S.A."/>
            <person name="Gerber S.A."/>
            <person name="Gygi S.P."/>
        </authorList>
    </citation>
    <scope>PHOSPHORYLATION [LARGE SCALE ANALYSIS] AT SER-21</scope>
    <scope>IDENTIFICATION BY MASS SPECTROMETRY [LARGE SCALE ANALYSIS]</scope>
    <source>
        <tissue>Liver</tissue>
    </source>
</reference>
<reference key="4">
    <citation type="journal article" date="2010" name="Cell">
        <title>A tissue-specific atlas of mouse protein phosphorylation and expression.</title>
        <authorList>
            <person name="Huttlin E.L."/>
            <person name="Jedrychowski M.P."/>
            <person name="Elias J.E."/>
            <person name="Goswami T."/>
            <person name="Rad R."/>
            <person name="Beausoleil S.A."/>
            <person name="Villen J."/>
            <person name="Haas W."/>
            <person name="Sowa M.E."/>
            <person name="Gygi S.P."/>
        </authorList>
    </citation>
    <scope>IDENTIFICATION BY MASS SPECTROMETRY [LARGE SCALE ANALYSIS]</scope>
    <source>
        <tissue>Brain</tissue>
        <tissue>Brown adipose tissue</tissue>
        <tissue>Heart</tissue>
        <tissue>Kidney</tissue>
        <tissue>Liver</tissue>
        <tissue>Lung</tissue>
        <tissue>Pancreas</tissue>
        <tissue>Spleen</tissue>
        <tissue>Testis</tissue>
    </source>
</reference>
<reference key="5">
    <citation type="journal article" date="2013" name="Mitochondrion">
        <title>Mitochondrial SIRT4-type proteins in Caenorhabditis elegans and mammals interact with pyruvate carboxylase and other acetylated biotin-dependent carboxylases.</title>
        <authorList>
            <person name="Wirth M."/>
            <person name="Karaca S."/>
            <person name="Wenzel D."/>
            <person name="Ho L."/>
            <person name="Tishkoff D."/>
            <person name="Lombard D.B."/>
            <person name="Verdin E."/>
            <person name="Urlaub H."/>
            <person name="Jedrusik-Bode M."/>
            <person name="Fischle W."/>
        </authorList>
    </citation>
    <scope>CATALYTIC ACTIVITY</scope>
    <scope>INTERACTION WITH SIRT4</scope>
    <scope>ACETYLATION AT LYS-35; LYS-39; LYS-79; LYS-148; LYS-152; LYS-241; LYS-434; LYS-589; LYS-717; LYS-748; LYS-892; LYS-969 AND LYS-992</scope>
    <scope>IDENTIFICATION BY MASS SPECTROMETRY</scope>
    <scope>MUTAGENESIS OF LYS-79; LYS-152 AND LYS-748</scope>
</reference>
<reference key="6">
    <citation type="journal article" date="2013" name="Mol. Cell">
        <title>SIRT5-mediated lysine desuccinylation impacts diverse metabolic pathways.</title>
        <authorList>
            <person name="Park J."/>
            <person name="Chen Y."/>
            <person name="Tishkoff D.X."/>
            <person name="Peng C."/>
            <person name="Tan M."/>
            <person name="Dai L."/>
            <person name="Xie Z."/>
            <person name="Zhang Y."/>
            <person name="Zwaans B.M."/>
            <person name="Skinner M.E."/>
            <person name="Lombard D.B."/>
            <person name="Zhao Y."/>
        </authorList>
    </citation>
    <scope>SUCCINYLATION [LARGE SCALE ANALYSIS] AT LYS-79; LYS-442 AND LYS-988</scope>
    <scope>IDENTIFICATION BY MASS SPECTROMETRY [LARGE SCALE ANALYSIS]</scope>
    <source>
        <tissue>Liver</tissue>
    </source>
</reference>
<reference key="7">
    <citation type="journal article" date="2013" name="Proc. Natl. Acad. Sci. U.S.A.">
        <title>Label-free quantitative proteomics of the lysine acetylome in mitochondria identifies substrates of SIRT3 in metabolic pathways.</title>
        <authorList>
            <person name="Rardin M.J."/>
            <person name="Newman J.C."/>
            <person name="Held J.M."/>
            <person name="Cusack M.P."/>
            <person name="Sorensen D.J."/>
            <person name="Li B."/>
            <person name="Schilling B."/>
            <person name="Mooney S.D."/>
            <person name="Kahn C.R."/>
            <person name="Verdin E."/>
            <person name="Gibson B.W."/>
        </authorList>
    </citation>
    <scope>ACETYLATION [LARGE SCALE ANALYSIS] AT LYS-79; LYS-297; LYS-316; LYS-319; LYS-434; LYS-661; LYS-748; LYS-988; LYS-992; LYS-1061; LYS-1090 AND LYS-1124</scope>
    <scope>IDENTIFICATION BY MASS SPECTROMETRY [LARGE SCALE ANALYSIS]</scope>
    <source>
        <tissue>Liver</tissue>
    </source>
</reference>
<organism>
    <name type="scientific">Mus musculus</name>
    <name type="common">Mouse</name>
    <dbReference type="NCBI Taxonomy" id="10090"/>
    <lineage>
        <taxon>Eukaryota</taxon>
        <taxon>Metazoa</taxon>
        <taxon>Chordata</taxon>
        <taxon>Craniata</taxon>
        <taxon>Vertebrata</taxon>
        <taxon>Euteleostomi</taxon>
        <taxon>Mammalia</taxon>
        <taxon>Eutheria</taxon>
        <taxon>Euarchontoglires</taxon>
        <taxon>Glires</taxon>
        <taxon>Rodentia</taxon>
        <taxon>Myomorpha</taxon>
        <taxon>Muroidea</taxon>
        <taxon>Muridae</taxon>
        <taxon>Murinae</taxon>
        <taxon>Mus</taxon>
        <taxon>Mus</taxon>
    </lineage>
</organism>
<evidence type="ECO:0000250" key="1"/>
<evidence type="ECO:0000250" key="2">
    <source>
        <dbReference type="UniProtKB" id="P11498"/>
    </source>
</evidence>
<evidence type="ECO:0000250" key="3">
    <source>
        <dbReference type="UniProtKB" id="P52873"/>
    </source>
</evidence>
<evidence type="ECO:0000255" key="4"/>
<evidence type="ECO:0000255" key="5">
    <source>
        <dbReference type="PROSITE-ProRule" id="PRU00409"/>
    </source>
</evidence>
<evidence type="ECO:0000255" key="6">
    <source>
        <dbReference type="PROSITE-ProRule" id="PRU01066"/>
    </source>
</evidence>
<evidence type="ECO:0000255" key="7">
    <source>
        <dbReference type="PROSITE-ProRule" id="PRU01151"/>
    </source>
</evidence>
<evidence type="ECO:0000269" key="8">
    <source>
    </source>
</evidence>
<evidence type="ECO:0000305" key="9">
    <source>
    </source>
</evidence>
<evidence type="ECO:0007744" key="10">
    <source>
    </source>
</evidence>
<evidence type="ECO:0007744" key="11">
    <source>
    </source>
</evidence>
<evidence type="ECO:0007744" key="12">
    <source>
    </source>
</evidence>
<proteinExistence type="evidence at protein level"/>
<name>PYC_MOUSE</name>
<protein>
    <recommendedName>
        <fullName>Pyruvate carboxylase, mitochondrial</fullName>
        <ecNumber evidence="9">6.4.1.1</ecNumber>
    </recommendedName>
    <alternativeName>
        <fullName>Pyruvic carboxylase</fullName>
        <shortName>PCB</shortName>
    </alternativeName>
</protein>
<dbReference type="EC" id="6.4.1.1" evidence="9"/>
<dbReference type="EMBL" id="L09192">
    <property type="protein sequence ID" value="AAA39737.1"/>
    <property type="molecule type" value="mRNA"/>
</dbReference>
<dbReference type="EMBL" id="BC055030">
    <property type="protein sequence ID" value="AAH55030.1"/>
    <property type="molecule type" value="mRNA"/>
</dbReference>
<dbReference type="CCDS" id="CCDS29430.1"/>
<dbReference type="PIR" id="A47255">
    <property type="entry name" value="A47255"/>
</dbReference>
<dbReference type="SMR" id="Q05920"/>
<dbReference type="FunCoup" id="Q05920">
    <property type="interactions" value="1370"/>
</dbReference>
<dbReference type="IntAct" id="Q05920">
    <property type="interactions" value="5"/>
</dbReference>
<dbReference type="MINT" id="Q05920"/>
<dbReference type="STRING" id="10090.ENSMUSP00000063825"/>
<dbReference type="CarbonylDB" id="Q05920"/>
<dbReference type="GlyGen" id="Q05920">
    <property type="glycosylation" value="2 sites, 1 O-linked glycan (1 site)"/>
</dbReference>
<dbReference type="iPTMnet" id="Q05920"/>
<dbReference type="PhosphoSitePlus" id="Q05920"/>
<dbReference type="SwissPalm" id="Q05920"/>
<dbReference type="REPRODUCTION-2DPAGE" id="Q05920"/>
<dbReference type="jPOST" id="Q05920"/>
<dbReference type="PaxDb" id="10090-ENSMUSP00000063825"/>
<dbReference type="PeptideAtlas" id="Q05920"/>
<dbReference type="ProteomicsDB" id="300363"/>
<dbReference type="Pumba" id="Q05920"/>
<dbReference type="AGR" id="MGI:97520"/>
<dbReference type="MGI" id="MGI:97520">
    <property type="gene designation" value="Pcx"/>
</dbReference>
<dbReference type="eggNOG" id="KOG0369">
    <property type="taxonomic scope" value="Eukaryota"/>
</dbReference>
<dbReference type="InParanoid" id="Q05920"/>
<dbReference type="PhylomeDB" id="Q05920"/>
<dbReference type="Reactome" id="R-MMU-196780">
    <property type="pathway name" value="Biotin transport and metabolism"/>
</dbReference>
<dbReference type="Reactome" id="R-MMU-70263">
    <property type="pathway name" value="Gluconeogenesis"/>
</dbReference>
<dbReference type="Reactome" id="R-MMU-70268">
    <property type="pathway name" value="Pyruvate metabolism"/>
</dbReference>
<dbReference type="UniPathway" id="UPA00138"/>
<dbReference type="ChiTaRS" id="Pcx">
    <property type="organism name" value="mouse"/>
</dbReference>
<dbReference type="PRO" id="PR:Q05920"/>
<dbReference type="Proteomes" id="UP000000589">
    <property type="component" value="Unplaced"/>
</dbReference>
<dbReference type="RNAct" id="Q05920">
    <property type="molecule type" value="protein"/>
</dbReference>
<dbReference type="GO" id="GO:0005743">
    <property type="term" value="C:mitochondrial inner membrane"/>
    <property type="evidence" value="ECO:0007005"/>
    <property type="project" value="MGI"/>
</dbReference>
<dbReference type="GO" id="GO:0005759">
    <property type="term" value="C:mitochondrial matrix"/>
    <property type="evidence" value="ECO:0000314"/>
    <property type="project" value="MGI"/>
</dbReference>
<dbReference type="GO" id="GO:0005739">
    <property type="term" value="C:mitochondrion"/>
    <property type="evidence" value="ECO:0000314"/>
    <property type="project" value="MGI"/>
</dbReference>
<dbReference type="GO" id="GO:0005524">
    <property type="term" value="F:ATP binding"/>
    <property type="evidence" value="ECO:0007669"/>
    <property type="project" value="UniProtKB-KW"/>
</dbReference>
<dbReference type="GO" id="GO:0046872">
    <property type="term" value="F:metal ion binding"/>
    <property type="evidence" value="ECO:0007669"/>
    <property type="project" value="UniProtKB-KW"/>
</dbReference>
<dbReference type="GO" id="GO:0004736">
    <property type="term" value="F:pyruvate carboxylase activity"/>
    <property type="evidence" value="ECO:0000315"/>
    <property type="project" value="MGI"/>
</dbReference>
<dbReference type="GO" id="GO:0006094">
    <property type="term" value="P:gluconeogenesis"/>
    <property type="evidence" value="ECO:0000315"/>
    <property type="project" value="MGI"/>
</dbReference>
<dbReference type="GO" id="GO:0046166">
    <property type="term" value="P:glyceraldehyde-3-phosphate biosynthetic process"/>
    <property type="evidence" value="ECO:0000266"/>
    <property type="project" value="MGI"/>
</dbReference>
<dbReference type="GO" id="GO:0006629">
    <property type="term" value="P:lipid metabolic process"/>
    <property type="evidence" value="ECO:0007669"/>
    <property type="project" value="UniProtKB-KW"/>
</dbReference>
<dbReference type="CDD" id="cd06850">
    <property type="entry name" value="biotinyl_domain"/>
    <property type="match status" value="1"/>
</dbReference>
<dbReference type="CDD" id="cd07937">
    <property type="entry name" value="DRE_TIM_PC_TC_5S"/>
    <property type="match status" value="1"/>
</dbReference>
<dbReference type="FunFam" id="2.40.50.100:FF:000003">
    <property type="entry name" value="Acetyl-CoA carboxylase biotin carboxyl carrier protein"/>
    <property type="match status" value="1"/>
</dbReference>
<dbReference type="FunFam" id="3.10.600.10:FF:000001">
    <property type="entry name" value="Pyruvate carboxylase"/>
    <property type="match status" value="1"/>
</dbReference>
<dbReference type="FunFam" id="3.20.20.70:FF:000033">
    <property type="entry name" value="Pyruvate carboxylase"/>
    <property type="match status" value="1"/>
</dbReference>
<dbReference type="FunFam" id="3.30.470.20:FF:000012">
    <property type="entry name" value="Pyruvate carboxylase"/>
    <property type="match status" value="1"/>
</dbReference>
<dbReference type="FunFam" id="1.10.10.60:FF:000512">
    <property type="entry name" value="Pyruvate carboxylase, mitochondrial"/>
    <property type="match status" value="1"/>
</dbReference>
<dbReference type="Gene3D" id="2.40.50.100">
    <property type="match status" value="1"/>
</dbReference>
<dbReference type="Gene3D" id="3.20.20.70">
    <property type="entry name" value="Aldolase class I"/>
    <property type="match status" value="1"/>
</dbReference>
<dbReference type="Gene3D" id="3.30.470.20">
    <property type="entry name" value="ATP-grasp fold, B domain"/>
    <property type="match status" value="1"/>
</dbReference>
<dbReference type="Gene3D" id="3.10.600.10">
    <property type="entry name" value="pyruvate carboxylase f1077a mutant domain"/>
    <property type="match status" value="1"/>
</dbReference>
<dbReference type="InterPro" id="IPR013785">
    <property type="entry name" value="Aldolase_TIM"/>
</dbReference>
<dbReference type="InterPro" id="IPR011761">
    <property type="entry name" value="ATP-grasp"/>
</dbReference>
<dbReference type="InterPro" id="IPR005481">
    <property type="entry name" value="BC-like_N"/>
</dbReference>
<dbReference type="InterPro" id="IPR001882">
    <property type="entry name" value="Biotin_BS"/>
</dbReference>
<dbReference type="InterPro" id="IPR011764">
    <property type="entry name" value="Biotin_carboxylation_dom"/>
</dbReference>
<dbReference type="InterPro" id="IPR005482">
    <property type="entry name" value="Biotin_COase_C"/>
</dbReference>
<dbReference type="InterPro" id="IPR000089">
    <property type="entry name" value="Biotin_lipoyl"/>
</dbReference>
<dbReference type="InterPro" id="IPR003379">
    <property type="entry name" value="Carboxylase_cons_dom"/>
</dbReference>
<dbReference type="InterPro" id="IPR005479">
    <property type="entry name" value="CbamoylP_synth_lsu-like_ATP-bd"/>
</dbReference>
<dbReference type="InterPro" id="IPR055268">
    <property type="entry name" value="PCB-like"/>
</dbReference>
<dbReference type="InterPro" id="IPR016185">
    <property type="entry name" value="PreATP-grasp_dom_sf"/>
</dbReference>
<dbReference type="InterPro" id="IPR000891">
    <property type="entry name" value="PYR_CT"/>
</dbReference>
<dbReference type="InterPro" id="IPR005930">
    <property type="entry name" value="Pyruv_COase"/>
</dbReference>
<dbReference type="InterPro" id="IPR011054">
    <property type="entry name" value="Rudment_hybrid_motif"/>
</dbReference>
<dbReference type="InterPro" id="IPR011053">
    <property type="entry name" value="Single_hybrid_motif"/>
</dbReference>
<dbReference type="NCBIfam" id="NF006761">
    <property type="entry name" value="PRK09282.1"/>
    <property type="match status" value="1"/>
</dbReference>
<dbReference type="NCBIfam" id="NF009554">
    <property type="entry name" value="PRK12999.1"/>
    <property type="match status" value="1"/>
</dbReference>
<dbReference type="NCBIfam" id="TIGR01235">
    <property type="entry name" value="pyruv_carbox"/>
    <property type="match status" value="1"/>
</dbReference>
<dbReference type="PANTHER" id="PTHR43778">
    <property type="entry name" value="PYRUVATE CARBOXYLASE"/>
    <property type="match status" value="1"/>
</dbReference>
<dbReference type="PANTHER" id="PTHR43778:SF2">
    <property type="entry name" value="PYRUVATE CARBOXYLASE, MITOCHONDRIAL"/>
    <property type="match status" value="1"/>
</dbReference>
<dbReference type="Pfam" id="PF02785">
    <property type="entry name" value="Biotin_carb_C"/>
    <property type="match status" value="1"/>
</dbReference>
<dbReference type="Pfam" id="PF00289">
    <property type="entry name" value="Biotin_carb_N"/>
    <property type="match status" value="1"/>
</dbReference>
<dbReference type="Pfam" id="PF00364">
    <property type="entry name" value="Biotin_lipoyl"/>
    <property type="match status" value="1"/>
</dbReference>
<dbReference type="Pfam" id="PF02786">
    <property type="entry name" value="CPSase_L_D2"/>
    <property type="match status" value="1"/>
</dbReference>
<dbReference type="Pfam" id="PF00682">
    <property type="entry name" value="HMGL-like"/>
    <property type="match status" value="1"/>
</dbReference>
<dbReference type="Pfam" id="PF02436">
    <property type="entry name" value="PYC_OADA"/>
    <property type="match status" value="1"/>
</dbReference>
<dbReference type="PIRSF" id="PIRSF001594">
    <property type="entry name" value="Pyruv_carbox"/>
    <property type="match status" value="1"/>
</dbReference>
<dbReference type="SMART" id="SM00878">
    <property type="entry name" value="Biotin_carb_C"/>
    <property type="match status" value="1"/>
</dbReference>
<dbReference type="SUPFAM" id="SSF51569">
    <property type="entry name" value="Aldolase"/>
    <property type="match status" value="1"/>
</dbReference>
<dbReference type="SUPFAM" id="SSF56059">
    <property type="entry name" value="Glutathione synthetase ATP-binding domain-like"/>
    <property type="match status" value="1"/>
</dbReference>
<dbReference type="SUPFAM" id="SSF89000">
    <property type="entry name" value="post-HMGL domain-like"/>
    <property type="match status" value="1"/>
</dbReference>
<dbReference type="SUPFAM" id="SSF52440">
    <property type="entry name" value="PreATP-grasp domain"/>
    <property type="match status" value="1"/>
</dbReference>
<dbReference type="SUPFAM" id="SSF51246">
    <property type="entry name" value="Rudiment single hybrid motif"/>
    <property type="match status" value="1"/>
</dbReference>
<dbReference type="SUPFAM" id="SSF51230">
    <property type="entry name" value="Single hybrid motif"/>
    <property type="match status" value="1"/>
</dbReference>
<dbReference type="PROSITE" id="PS50975">
    <property type="entry name" value="ATP_GRASP"/>
    <property type="match status" value="1"/>
</dbReference>
<dbReference type="PROSITE" id="PS50979">
    <property type="entry name" value="BC"/>
    <property type="match status" value="1"/>
</dbReference>
<dbReference type="PROSITE" id="PS00188">
    <property type="entry name" value="BIOTIN"/>
    <property type="match status" value="1"/>
</dbReference>
<dbReference type="PROSITE" id="PS50968">
    <property type="entry name" value="BIOTINYL_LIPOYL"/>
    <property type="match status" value="1"/>
</dbReference>
<dbReference type="PROSITE" id="PS50991">
    <property type="entry name" value="PYR_CT"/>
    <property type="match status" value="1"/>
</dbReference>
<comment type="function">
    <text evidence="2">Pyruvate carboxylase catalyzes a 2-step reaction, involving the ATP-dependent carboxylation of the covalently attached biotin in the first step and the transfer of the carboxyl group to pyruvate in the second. Catalyzes in a tissue specific manner, the initial reactions of glucose (liver, kidney) and lipid (adipose tissue, liver, brain) synthesis from pyruvate.</text>
</comment>
<comment type="catalytic activity">
    <reaction evidence="9">
        <text>hydrogencarbonate + pyruvate + ATP = oxaloacetate + ADP + phosphate + H(+)</text>
        <dbReference type="Rhea" id="RHEA:20844"/>
        <dbReference type="ChEBI" id="CHEBI:15361"/>
        <dbReference type="ChEBI" id="CHEBI:15378"/>
        <dbReference type="ChEBI" id="CHEBI:16452"/>
        <dbReference type="ChEBI" id="CHEBI:17544"/>
        <dbReference type="ChEBI" id="CHEBI:30616"/>
        <dbReference type="ChEBI" id="CHEBI:43474"/>
        <dbReference type="ChEBI" id="CHEBI:456216"/>
        <dbReference type="EC" id="6.4.1.1"/>
    </reaction>
    <physiologicalReaction direction="left-to-right" evidence="9">
        <dbReference type="Rhea" id="RHEA:20845"/>
    </physiologicalReaction>
</comment>
<comment type="cofactor">
    <cofactor evidence="2">
        <name>biotin</name>
        <dbReference type="ChEBI" id="CHEBI:57586"/>
    </cofactor>
</comment>
<comment type="cofactor">
    <cofactor evidence="2">
        <name>Mn(2+)</name>
        <dbReference type="ChEBI" id="CHEBI:29035"/>
    </cofactor>
    <text evidence="2">Binds 1 Mn(2+) ion per subunit.</text>
</comment>
<comment type="pathway">
    <text evidence="2">Carbohydrate biosynthesis; gluconeogenesis.</text>
</comment>
<comment type="subunit">
    <text evidence="2 8">Homotetramer (By similarity). Interacts (via the biotin carboxylation domain) with SIRT4 (PubMed:23438705).</text>
</comment>
<comment type="subcellular location">
    <subcellularLocation>
        <location evidence="2">Mitochondrion matrix</location>
    </subcellularLocation>
</comment>
<comment type="tissue specificity">
    <text>Liver, kidney, adipose tissue, liver and brain.</text>
</comment>
<comment type="PTM">
    <text evidence="8">Acetylation of Lys-316 is observed in liver mitochondria from fasted mice but not from fed mice (PubMed:23576753). Acetylation of Lys-748 might play a role in catalytic activity regulation (PubMed:23438705).</text>
</comment>
<keyword id="KW-0007">Acetylation</keyword>
<keyword id="KW-0067">ATP-binding</keyword>
<keyword id="KW-0092">Biotin</keyword>
<keyword id="KW-0312">Gluconeogenesis</keyword>
<keyword id="KW-0436">Ligase</keyword>
<keyword id="KW-0444">Lipid biosynthesis</keyword>
<keyword id="KW-0443">Lipid metabolism</keyword>
<keyword id="KW-0464">Manganese</keyword>
<keyword id="KW-0479">Metal-binding</keyword>
<keyword id="KW-0496">Mitochondrion</keyword>
<keyword id="KW-0511">Multifunctional enzyme</keyword>
<keyword id="KW-0547">Nucleotide-binding</keyword>
<keyword id="KW-0597">Phosphoprotein</keyword>
<keyword id="KW-0670">Pyruvate</keyword>
<keyword id="KW-1185">Reference proteome</keyword>
<keyword id="KW-0809">Transit peptide</keyword>
<gene>
    <name type="primary">Pc</name>
    <name type="synonym">Pcx</name>
</gene>
<accession>Q05920</accession>
<feature type="transit peptide" description="Mitochondrion" evidence="4">
    <location>
        <begin position="1"/>
        <end position="20"/>
    </location>
</feature>
<feature type="chain" id="PRO_0000002841" description="Pyruvate carboxylase, mitochondrial">
    <location>
        <begin position="21"/>
        <end position="1178"/>
    </location>
</feature>
<feature type="domain" description="Biotin carboxylation">
    <location>
        <begin position="36"/>
        <end position="486"/>
    </location>
</feature>
<feature type="domain" description="ATP-grasp" evidence="5">
    <location>
        <begin position="156"/>
        <end position="353"/>
    </location>
</feature>
<feature type="domain" description="Pyruvate carboxyltransferase" evidence="7">
    <location>
        <begin position="563"/>
        <end position="832"/>
    </location>
</feature>
<feature type="domain" description="Biotinyl-binding" evidence="6">
    <location>
        <begin position="1109"/>
        <end position="1178"/>
    </location>
</feature>
<feature type="active site" evidence="1">
    <location>
        <position position="328"/>
    </location>
</feature>
<feature type="binding site" evidence="1">
    <location>
        <position position="152"/>
    </location>
    <ligand>
        <name>ATP</name>
        <dbReference type="ChEBI" id="CHEBI:30616"/>
    </ligand>
</feature>
<feature type="binding site" evidence="1">
    <location>
        <position position="236"/>
    </location>
    <ligand>
        <name>ATP</name>
        <dbReference type="ChEBI" id="CHEBI:30616"/>
    </ligand>
</feature>
<feature type="binding site" evidence="1">
    <location>
        <position position="271"/>
    </location>
    <ligand>
        <name>ATP</name>
        <dbReference type="ChEBI" id="CHEBI:30616"/>
    </ligand>
</feature>
<feature type="binding site" evidence="1">
    <location>
        <begin position="571"/>
        <end position="575"/>
    </location>
    <ligand>
        <name>substrate</name>
    </ligand>
</feature>
<feature type="binding site" evidence="1">
    <location>
        <position position="572"/>
    </location>
    <ligand>
        <name>Mn(2+)</name>
        <dbReference type="ChEBI" id="CHEBI:29035"/>
    </ligand>
</feature>
<feature type="binding site" evidence="1">
    <location>
        <position position="644"/>
    </location>
    <ligand>
        <name>substrate</name>
    </ligand>
</feature>
<feature type="binding site" description="via carbamate group" evidence="1">
    <location>
        <position position="741"/>
    </location>
    <ligand>
        <name>Mn(2+)</name>
        <dbReference type="ChEBI" id="CHEBI:29035"/>
    </ligand>
</feature>
<feature type="binding site" evidence="1">
    <location>
        <position position="771"/>
    </location>
    <ligand>
        <name>Mn(2+)</name>
        <dbReference type="ChEBI" id="CHEBI:29035"/>
    </ligand>
</feature>
<feature type="binding site" evidence="1">
    <location>
        <position position="773"/>
    </location>
    <ligand>
        <name>Mn(2+)</name>
        <dbReference type="ChEBI" id="CHEBI:29035"/>
    </ligand>
</feature>
<feature type="binding site" evidence="1">
    <location>
        <position position="908"/>
    </location>
    <ligand>
        <name>substrate</name>
    </ligand>
</feature>
<feature type="modified residue" description="Phosphoserine" evidence="10">
    <location>
        <position position="21"/>
    </location>
</feature>
<feature type="modified residue" description="N6-acetyllysine" evidence="8">
    <location>
        <position position="35"/>
    </location>
</feature>
<feature type="modified residue" description="N6-acetyllysine" evidence="8">
    <location>
        <position position="39"/>
    </location>
</feature>
<feature type="modified residue" description="N6-acetyllysine; alternate" evidence="8 11">
    <location>
        <position position="79"/>
    </location>
</feature>
<feature type="modified residue" description="N6-succinyllysine; alternate" evidence="12">
    <location>
        <position position="79"/>
    </location>
</feature>
<feature type="modified residue" description="N6-acetyllysine" evidence="8">
    <location>
        <position position="148"/>
    </location>
</feature>
<feature type="modified residue" description="N6-acetyllysine" evidence="8">
    <location>
        <position position="152"/>
    </location>
</feature>
<feature type="modified residue" description="N6-acetyllysine" evidence="8">
    <location>
        <position position="241"/>
    </location>
</feature>
<feature type="modified residue" description="N6-acetyllysine" evidence="11">
    <location>
        <position position="297"/>
    </location>
</feature>
<feature type="modified residue" description="N6-acetyllysine" evidence="11">
    <location>
        <position position="316"/>
    </location>
</feature>
<feature type="modified residue" description="N6-acetyllysine" evidence="11">
    <location>
        <position position="319"/>
    </location>
</feature>
<feature type="modified residue" description="N6-acetyllysine" evidence="8 11">
    <location>
        <position position="434"/>
    </location>
</feature>
<feature type="modified residue" description="N6-succinyllysine" evidence="12">
    <location>
        <position position="442"/>
    </location>
</feature>
<feature type="modified residue" description="N6-acetyllysine" evidence="8">
    <location>
        <position position="589"/>
    </location>
</feature>
<feature type="modified residue" description="N6-acetyllysine" evidence="11">
    <location>
        <position position="661"/>
    </location>
</feature>
<feature type="modified residue" description="N6-acetyllysine" evidence="8">
    <location>
        <position position="717"/>
    </location>
</feature>
<feature type="modified residue" description="N6-carboxylysine" evidence="1">
    <location>
        <position position="741"/>
    </location>
</feature>
<feature type="modified residue" description="N6-acetyllysine" evidence="8 11">
    <location>
        <position position="748"/>
    </location>
</feature>
<feature type="modified residue" description="N6-acetyllysine" evidence="8">
    <location>
        <position position="892"/>
    </location>
</feature>
<feature type="modified residue" description="N6-acetyllysine" evidence="8">
    <location>
        <position position="969"/>
    </location>
</feature>
<feature type="modified residue" description="N6-acetyllysine; alternate" evidence="11">
    <location>
        <position position="988"/>
    </location>
</feature>
<feature type="modified residue" description="N6-succinyllysine; alternate" evidence="12">
    <location>
        <position position="988"/>
    </location>
</feature>
<feature type="modified residue" description="N6-acetyllysine" evidence="11">
    <location>
        <position position="992"/>
    </location>
</feature>
<feature type="modified residue" description="Phosphothreonine" evidence="3">
    <location>
        <position position="1003"/>
    </location>
</feature>
<feature type="modified residue" description="N6-acetyllysine" evidence="11">
    <location>
        <position position="1061"/>
    </location>
</feature>
<feature type="modified residue" description="N6-acetyllysine" evidence="11">
    <location>
        <position position="1090"/>
    </location>
</feature>
<feature type="modified residue" description="N6-acetyllysine" evidence="11">
    <location>
        <position position="1124"/>
    </location>
</feature>
<feature type="modified residue" description="N6-biotinyllysine" evidence="1 6">
    <location>
        <position position="1144"/>
    </location>
</feature>
<feature type="mutagenesis site" description="Reduced pyruvate carboxylase activity." evidence="8">
    <original>K</original>
    <variation>Q</variation>
    <variation>R</variation>
    <location>
        <position position="79"/>
    </location>
</feature>
<feature type="mutagenesis site" description="Reduced pyruvate carboxylase activity." evidence="8">
    <original>K</original>
    <variation>Q</variation>
    <variation>R</variation>
    <location>
        <position position="152"/>
    </location>
</feature>
<feature type="mutagenesis site" description="Reduced pyruvate carboxylase activity." evidence="8">
    <original>K</original>
    <variation>Q</variation>
    <location>
        <position position="748"/>
    </location>
</feature>